<keyword id="KW-0067">ATP-binding</keyword>
<keyword id="KW-0963">Cytoplasm</keyword>
<keyword id="KW-0547">Nucleotide-binding</keyword>
<keyword id="KW-0548">Nucleotidyltransferase</keyword>
<keyword id="KW-1185">Reference proteome</keyword>
<keyword id="KW-0808">Transferase</keyword>
<keyword id="KW-0819">tRNA processing</keyword>
<accession>Q9I7A5</accession>
<gene>
    <name evidence="1" type="primary">tsaC</name>
    <name type="synonym">rimN</name>
    <name type="ordered locus">PA0022</name>
</gene>
<name>TSAC_PSEAE</name>
<sequence>MISSFRAQCAARVVREGGVIAYPTEAVWGLGCDPWNEDAVYRLLALKARPVEKGLIVVAANIHQLDFLLEDLPDVWLDRLAGTWPGPNTWLVPHQERLPEWVTGVHDSVAVRVTDHPLVQELCHLTGPLISTSANPAGRPAARTRLRVEQYFHDELDAILGGALGGRRNPSLIRDLVTGQVIRPA</sequence>
<proteinExistence type="inferred from homology"/>
<reference key="1">
    <citation type="journal article" date="2000" name="Nature">
        <title>Complete genome sequence of Pseudomonas aeruginosa PAO1, an opportunistic pathogen.</title>
        <authorList>
            <person name="Stover C.K."/>
            <person name="Pham X.-Q.T."/>
            <person name="Erwin A.L."/>
            <person name="Mizoguchi S.D."/>
            <person name="Warrener P."/>
            <person name="Hickey M.J."/>
            <person name="Brinkman F.S.L."/>
            <person name="Hufnagle W.O."/>
            <person name="Kowalik D.J."/>
            <person name="Lagrou M."/>
            <person name="Garber R.L."/>
            <person name="Goltry L."/>
            <person name="Tolentino E."/>
            <person name="Westbrock-Wadman S."/>
            <person name="Yuan Y."/>
            <person name="Brody L.L."/>
            <person name="Coulter S.N."/>
            <person name="Folger K.R."/>
            <person name="Kas A."/>
            <person name="Larbig K."/>
            <person name="Lim R.M."/>
            <person name="Smith K.A."/>
            <person name="Spencer D.H."/>
            <person name="Wong G.K.-S."/>
            <person name="Wu Z."/>
            <person name="Paulsen I.T."/>
            <person name="Reizer J."/>
            <person name="Saier M.H. Jr."/>
            <person name="Hancock R.E.W."/>
            <person name="Lory S."/>
            <person name="Olson M.V."/>
        </authorList>
    </citation>
    <scope>NUCLEOTIDE SEQUENCE [LARGE SCALE GENOMIC DNA]</scope>
    <source>
        <strain>ATCC 15692 / DSM 22644 / CIP 104116 / JCM 14847 / LMG 12228 / 1C / PRS 101 / PAO1</strain>
    </source>
</reference>
<dbReference type="EC" id="2.7.7.87" evidence="1"/>
<dbReference type="EMBL" id="AE004091">
    <property type="protein sequence ID" value="AAG03412.1"/>
    <property type="molecule type" value="Genomic_DNA"/>
</dbReference>
<dbReference type="PIR" id="C83644">
    <property type="entry name" value="C83644"/>
</dbReference>
<dbReference type="RefSeq" id="NP_248712.1">
    <property type="nucleotide sequence ID" value="NC_002516.2"/>
</dbReference>
<dbReference type="RefSeq" id="WP_003097300.1">
    <property type="nucleotide sequence ID" value="NZ_QZGE01000012.1"/>
</dbReference>
<dbReference type="SMR" id="Q9I7A5"/>
<dbReference type="FunCoup" id="Q9I7A5">
    <property type="interactions" value="339"/>
</dbReference>
<dbReference type="STRING" id="208964.PA0022"/>
<dbReference type="PaxDb" id="208964-PA0022"/>
<dbReference type="DNASU" id="880711"/>
<dbReference type="GeneID" id="880711"/>
<dbReference type="KEGG" id="pae:PA0022"/>
<dbReference type="PATRIC" id="fig|208964.12.peg.21"/>
<dbReference type="PseudoCAP" id="PA0022"/>
<dbReference type="HOGENOM" id="CLU_031397_6_0_6"/>
<dbReference type="InParanoid" id="Q9I7A5"/>
<dbReference type="OrthoDB" id="9814580at2"/>
<dbReference type="PhylomeDB" id="Q9I7A5"/>
<dbReference type="BioCyc" id="PAER208964:G1FZ6-22-MONOMER"/>
<dbReference type="Proteomes" id="UP000002438">
    <property type="component" value="Chromosome"/>
</dbReference>
<dbReference type="GO" id="GO:0005737">
    <property type="term" value="C:cytoplasm"/>
    <property type="evidence" value="ECO:0000318"/>
    <property type="project" value="GO_Central"/>
</dbReference>
<dbReference type="GO" id="GO:0005524">
    <property type="term" value="F:ATP binding"/>
    <property type="evidence" value="ECO:0007669"/>
    <property type="project" value="UniProtKB-UniRule"/>
</dbReference>
<dbReference type="GO" id="GO:0003725">
    <property type="term" value="F:double-stranded RNA binding"/>
    <property type="evidence" value="ECO:0007669"/>
    <property type="project" value="InterPro"/>
</dbReference>
<dbReference type="GO" id="GO:0061710">
    <property type="term" value="F:L-threonylcarbamoyladenylate synthase"/>
    <property type="evidence" value="ECO:0007669"/>
    <property type="project" value="UniProtKB-EC"/>
</dbReference>
<dbReference type="GO" id="GO:0016779">
    <property type="term" value="F:nucleotidyltransferase activity"/>
    <property type="evidence" value="ECO:0000318"/>
    <property type="project" value="GO_Central"/>
</dbReference>
<dbReference type="GO" id="GO:0000049">
    <property type="term" value="F:tRNA binding"/>
    <property type="evidence" value="ECO:0000318"/>
    <property type="project" value="GO_Central"/>
</dbReference>
<dbReference type="GO" id="GO:0006450">
    <property type="term" value="P:regulation of translational fidelity"/>
    <property type="evidence" value="ECO:0000318"/>
    <property type="project" value="GO_Central"/>
</dbReference>
<dbReference type="GO" id="GO:0002949">
    <property type="term" value="P:tRNA threonylcarbamoyladenosine modification"/>
    <property type="evidence" value="ECO:0007669"/>
    <property type="project" value="UniProtKB-UniRule"/>
</dbReference>
<dbReference type="FunFam" id="3.90.870.10:FF:000004">
    <property type="entry name" value="Threonylcarbamoyl-AMP synthase"/>
    <property type="match status" value="1"/>
</dbReference>
<dbReference type="Gene3D" id="3.90.870.10">
    <property type="entry name" value="DHBP synthase"/>
    <property type="match status" value="1"/>
</dbReference>
<dbReference type="HAMAP" id="MF_01852">
    <property type="entry name" value="TsaC"/>
    <property type="match status" value="1"/>
</dbReference>
<dbReference type="InterPro" id="IPR017945">
    <property type="entry name" value="DHBP_synth_RibB-like_a/b_dom"/>
</dbReference>
<dbReference type="InterPro" id="IPR006070">
    <property type="entry name" value="Sua5-like_dom"/>
</dbReference>
<dbReference type="InterPro" id="IPR023535">
    <property type="entry name" value="TC-AMP_synthase"/>
</dbReference>
<dbReference type="InterPro" id="IPR050156">
    <property type="entry name" value="TC-AMP_synthase_SUA5"/>
</dbReference>
<dbReference type="PANTHER" id="PTHR17490">
    <property type="entry name" value="SUA5"/>
    <property type="match status" value="1"/>
</dbReference>
<dbReference type="PANTHER" id="PTHR17490:SF18">
    <property type="entry name" value="THREONYLCARBAMOYL-AMP SYNTHASE"/>
    <property type="match status" value="1"/>
</dbReference>
<dbReference type="Pfam" id="PF01300">
    <property type="entry name" value="Sua5_yciO_yrdC"/>
    <property type="match status" value="1"/>
</dbReference>
<dbReference type="SUPFAM" id="SSF55821">
    <property type="entry name" value="YrdC/RibB"/>
    <property type="match status" value="1"/>
</dbReference>
<dbReference type="PROSITE" id="PS51163">
    <property type="entry name" value="YRDC"/>
    <property type="match status" value="1"/>
</dbReference>
<protein>
    <recommendedName>
        <fullName evidence="1">Threonylcarbamoyl-AMP synthase</fullName>
        <shortName evidence="1">TC-AMP synthase</shortName>
        <ecNumber evidence="1">2.7.7.87</ecNumber>
    </recommendedName>
    <alternativeName>
        <fullName evidence="1">L-threonylcarbamoyladenylate synthase</fullName>
    </alternativeName>
    <alternativeName>
        <fullName evidence="1">t(6)A37 threonylcarbamoyladenosine biosynthesis protein TsaC</fullName>
    </alternativeName>
    <alternativeName>
        <fullName evidence="1">tRNA threonylcarbamoyladenosine biosynthesis protein TsaC</fullName>
    </alternativeName>
</protein>
<organism>
    <name type="scientific">Pseudomonas aeruginosa (strain ATCC 15692 / DSM 22644 / CIP 104116 / JCM 14847 / LMG 12228 / 1C / PRS 101 / PAO1)</name>
    <dbReference type="NCBI Taxonomy" id="208964"/>
    <lineage>
        <taxon>Bacteria</taxon>
        <taxon>Pseudomonadati</taxon>
        <taxon>Pseudomonadota</taxon>
        <taxon>Gammaproteobacteria</taxon>
        <taxon>Pseudomonadales</taxon>
        <taxon>Pseudomonadaceae</taxon>
        <taxon>Pseudomonas</taxon>
    </lineage>
</organism>
<feature type="chain" id="PRO_0000352948" description="Threonylcarbamoyl-AMP synthase">
    <location>
        <begin position="1"/>
        <end position="185"/>
    </location>
</feature>
<feature type="domain" description="YrdC-like" evidence="1">
    <location>
        <begin position="4"/>
        <end position="185"/>
    </location>
</feature>
<comment type="function">
    <text evidence="1">Required for the formation of a threonylcarbamoyl group on adenosine at position 37 (t(6)A37) in tRNAs that read codons beginning with adenine. Catalyzes the conversion of L-threonine, HCO(3)(-)/CO(2) and ATP to give threonylcarbamoyl-AMP (TC-AMP) as the acyladenylate intermediate, with the release of diphosphate.</text>
</comment>
<comment type="catalytic activity">
    <reaction evidence="1">
        <text>L-threonine + hydrogencarbonate + ATP = L-threonylcarbamoyladenylate + diphosphate + H2O</text>
        <dbReference type="Rhea" id="RHEA:36407"/>
        <dbReference type="ChEBI" id="CHEBI:15377"/>
        <dbReference type="ChEBI" id="CHEBI:17544"/>
        <dbReference type="ChEBI" id="CHEBI:30616"/>
        <dbReference type="ChEBI" id="CHEBI:33019"/>
        <dbReference type="ChEBI" id="CHEBI:57926"/>
        <dbReference type="ChEBI" id="CHEBI:73682"/>
        <dbReference type="EC" id="2.7.7.87"/>
    </reaction>
</comment>
<comment type="subcellular location">
    <subcellularLocation>
        <location evidence="1">Cytoplasm</location>
    </subcellularLocation>
</comment>
<comment type="similarity">
    <text evidence="1">Belongs to the SUA5 family. TsaC subfamily.</text>
</comment>
<evidence type="ECO:0000255" key="1">
    <source>
        <dbReference type="HAMAP-Rule" id="MF_01852"/>
    </source>
</evidence>